<feature type="chain" id="PRO_0000164255" description="Uncharacterized transporter YDR338C">
    <location>
        <begin position="1"/>
        <end position="695"/>
    </location>
</feature>
<feature type="transmembrane region" description="Helical" evidence="1">
    <location>
        <begin position="237"/>
        <end position="257"/>
    </location>
</feature>
<feature type="transmembrane region" description="Helical" evidence="1">
    <location>
        <begin position="265"/>
        <end position="285"/>
    </location>
</feature>
<feature type="transmembrane region" description="Helical" evidence="1">
    <location>
        <begin position="313"/>
        <end position="333"/>
    </location>
</feature>
<feature type="transmembrane region" description="Helical" evidence="1">
    <location>
        <begin position="344"/>
        <end position="364"/>
    </location>
</feature>
<feature type="transmembrane region" description="Helical" evidence="1">
    <location>
        <begin position="380"/>
        <end position="400"/>
    </location>
</feature>
<feature type="transmembrane region" description="Helical" evidence="1">
    <location>
        <begin position="408"/>
        <end position="428"/>
    </location>
</feature>
<feature type="transmembrane region" description="Helical" evidence="1">
    <location>
        <begin position="457"/>
        <end position="477"/>
    </location>
</feature>
<feature type="transmembrane region" description="Helical" evidence="1">
    <location>
        <begin position="488"/>
        <end position="508"/>
    </location>
</feature>
<feature type="transmembrane region" description="Helical" evidence="1">
    <location>
        <begin position="531"/>
        <end position="551"/>
    </location>
</feature>
<feature type="transmembrane region" description="Helical" evidence="1">
    <location>
        <begin position="565"/>
        <end position="585"/>
    </location>
</feature>
<feature type="transmembrane region" description="Helical" evidence="1">
    <location>
        <begin position="604"/>
        <end position="624"/>
    </location>
</feature>
<feature type="transmembrane region" description="Helical" evidence="1">
    <location>
        <begin position="633"/>
        <end position="653"/>
    </location>
</feature>
<feature type="region of interest" description="Disordered" evidence="2">
    <location>
        <begin position="673"/>
        <end position="695"/>
    </location>
</feature>
<feature type="compositionally biased region" description="Acidic residues" evidence="2">
    <location>
        <begin position="673"/>
        <end position="688"/>
    </location>
</feature>
<feature type="modified residue" description="Phosphoserine" evidence="5">
    <location>
        <position position="113"/>
    </location>
</feature>
<sequence length="695" mass="77846">MAGILSKTLSEVHPSLRTNGMGIGNTHRRISLGFLPPNKKNPLVRKFRARTRNIDQRSFRSLTDDFGSNVHEPNPYLGNIDEEPDLYYHDEEDGELSRTISLPSRVSETPELSPQDVDWILHEHERRYSSVCNSDNEEASQSNTPDRIQEYSGRELEYDEFMNRLQAQKQKLTRSAVTDAKGTSHHRRPSFVSVTSRGSVPTIYQEIDENDSEALAELAHSHVTFKSEARVLASYSFPLIFTFLLEQIFPMVCSLTVGHLGKNELAAVSLASMTSNITLAIFEGIATSLDTLCPQAYGSGRFYSVGVHLQRCIAFSLVIYIPFAVMWWYSEPLLSYIIPEKELINLTSRFLRVLILGAPAYIFFENLKRFLQAQGIFDAGIYVLTICAPLNVLVSYTLVWNKYIGVGFIGAAIAVVLNFWLMFFLLLFYALYIDGRKCWGGFSRKAFTHWNDLGHLAFSGIIMLEAEELSYELLTLFSAYYGVSYLAAQSAVSTMAALLYMIPFAIGISTSTRIANFIGAKRTDFAHISSQVGLSFSFIAGFINCCILVFGRNLIANIYSKDPEVIKLIAQVLPLVGIVQNFDSLNAVAGSCLRGQGMQSLGSIVNLMAYYLFGIPLALILSWFFDMKLYGLWIGIGSAMLLIGLVEAYYVLFPDWDKIMTYAEILKETEDDEVDSDEYLTDSDDPDENTALLGA</sequence>
<keyword id="KW-0472">Membrane</keyword>
<keyword id="KW-0597">Phosphoprotein</keyword>
<keyword id="KW-1185">Reference proteome</keyword>
<keyword id="KW-0812">Transmembrane</keyword>
<keyword id="KW-1133">Transmembrane helix</keyword>
<keyword id="KW-0813">Transport</keyword>
<gene>
    <name type="ordered locus">YDR338C</name>
    <name type="ORF">D9651.8</name>
</gene>
<evidence type="ECO:0000255" key="1"/>
<evidence type="ECO:0000256" key="2">
    <source>
        <dbReference type="SAM" id="MobiDB-lite"/>
    </source>
</evidence>
<evidence type="ECO:0000269" key="3">
    <source>
    </source>
</evidence>
<evidence type="ECO:0000305" key="4"/>
<evidence type="ECO:0007744" key="5">
    <source>
    </source>
</evidence>
<reference key="1">
    <citation type="journal article" date="1997" name="Nature">
        <title>The nucleotide sequence of Saccharomyces cerevisiae chromosome IV.</title>
        <authorList>
            <person name="Jacq C."/>
            <person name="Alt-Moerbe J."/>
            <person name="Andre B."/>
            <person name="Arnold W."/>
            <person name="Bahr A."/>
            <person name="Ballesta J.P.G."/>
            <person name="Bargues M."/>
            <person name="Baron L."/>
            <person name="Becker A."/>
            <person name="Biteau N."/>
            <person name="Bloecker H."/>
            <person name="Blugeon C."/>
            <person name="Boskovic J."/>
            <person name="Brandt P."/>
            <person name="Brueckner M."/>
            <person name="Buitrago M.J."/>
            <person name="Coster F."/>
            <person name="Delaveau T."/>
            <person name="del Rey F."/>
            <person name="Dujon B."/>
            <person name="Eide L.G."/>
            <person name="Garcia-Cantalejo J.M."/>
            <person name="Goffeau A."/>
            <person name="Gomez-Peris A."/>
            <person name="Granotier C."/>
            <person name="Hanemann V."/>
            <person name="Hankeln T."/>
            <person name="Hoheisel J.D."/>
            <person name="Jaeger W."/>
            <person name="Jimenez A."/>
            <person name="Jonniaux J.-L."/>
            <person name="Kraemer C."/>
            <person name="Kuester H."/>
            <person name="Laamanen P."/>
            <person name="Legros Y."/>
            <person name="Louis E.J."/>
            <person name="Moeller-Rieker S."/>
            <person name="Monnet A."/>
            <person name="Moro M."/>
            <person name="Mueller-Auer S."/>
            <person name="Nussbaumer B."/>
            <person name="Paricio N."/>
            <person name="Paulin L."/>
            <person name="Perea J."/>
            <person name="Perez-Alonso M."/>
            <person name="Perez-Ortin J.E."/>
            <person name="Pohl T.M."/>
            <person name="Prydz H."/>
            <person name="Purnelle B."/>
            <person name="Rasmussen S.W."/>
            <person name="Remacha M.A."/>
            <person name="Revuelta J.L."/>
            <person name="Rieger M."/>
            <person name="Salom D."/>
            <person name="Saluz H.P."/>
            <person name="Saiz J.E."/>
            <person name="Saren A.-M."/>
            <person name="Schaefer M."/>
            <person name="Scharfe M."/>
            <person name="Schmidt E.R."/>
            <person name="Schneider C."/>
            <person name="Scholler P."/>
            <person name="Schwarz S."/>
            <person name="Soler-Mira A."/>
            <person name="Urrestarazu L.A."/>
            <person name="Verhasselt P."/>
            <person name="Vissers S."/>
            <person name="Voet M."/>
            <person name="Volckaert G."/>
            <person name="Wagner G."/>
            <person name="Wambutt R."/>
            <person name="Wedler E."/>
            <person name="Wedler H."/>
            <person name="Woelfl S."/>
            <person name="Harris D.E."/>
            <person name="Bowman S."/>
            <person name="Brown D."/>
            <person name="Churcher C.M."/>
            <person name="Connor R."/>
            <person name="Dedman K."/>
            <person name="Gentles S."/>
            <person name="Hamlin N."/>
            <person name="Hunt S."/>
            <person name="Jones L."/>
            <person name="McDonald S."/>
            <person name="Murphy L.D."/>
            <person name="Niblett D."/>
            <person name="Odell C."/>
            <person name="Oliver K."/>
            <person name="Rajandream M.A."/>
            <person name="Richards C."/>
            <person name="Shore L."/>
            <person name="Walsh S.V."/>
            <person name="Barrell B.G."/>
            <person name="Dietrich F.S."/>
            <person name="Mulligan J.T."/>
            <person name="Allen E."/>
            <person name="Araujo R."/>
            <person name="Aviles E."/>
            <person name="Berno A."/>
            <person name="Carpenter J."/>
            <person name="Chen E."/>
            <person name="Cherry J.M."/>
            <person name="Chung E."/>
            <person name="Duncan M."/>
            <person name="Hunicke-Smith S."/>
            <person name="Hyman R.W."/>
            <person name="Komp C."/>
            <person name="Lashkari D."/>
            <person name="Lew H."/>
            <person name="Lin D."/>
            <person name="Mosedale D."/>
            <person name="Nakahara K."/>
            <person name="Namath A."/>
            <person name="Oefner P."/>
            <person name="Oh C."/>
            <person name="Petel F.X."/>
            <person name="Roberts D."/>
            <person name="Schramm S."/>
            <person name="Schroeder M."/>
            <person name="Shogren T."/>
            <person name="Shroff N."/>
            <person name="Winant A."/>
            <person name="Yelton M.A."/>
            <person name="Botstein D."/>
            <person name="Davis R.W."/>
            <person name="Johnston M."/>
            <person name="Andrews S."/>
            <person name="Brinkman R."/>
            <person name="Cooper J."/>
            <person name="Ding H."/>
            <person name="Du Z."/>
            <person name="Favello A."/>
            <person name="Fulton L."/>
            <person name="Gattung S."/>
            <person name="Greco T."/>
            <person name="Hallsworth K."/>
            <person name="Hawkins J."/>
            <person name="Hillier L.W."/>
            <person name="Jier M."/>
            <person name="Johnson D."/>
            <person name="Johnston L."/>
            <person name="Kirsten J."/>
            <person name="Kucaba T."/>
            <person name="Langston Y."/>
            <person name="Latreille P."/>
            <person name="Le T."/>
            <person name="Mardis E."/>
            <person name="Menezes S."/>
            <person name="Miller N."/>
            <person name="Nhan M."/>
            <person name="Pauley A."/>
            <person name="Peluso D."/>
            <person name="Rifkin L."/>
            <person name="Riles L."/>
            <person name="Taich A."/>
            <person name="Trevaskis E."/>
            <person name="Vignati D."/>
            <person name="Wilcox L."/>
            <person name="Wohldman P."/>
            <person name="Vaudin M."/>
            <person name="Wilson R."/>
            <person name="Waterston R."/>
            <person name="Albermann K."/>
            <person name="Hani J."/>
            <person name="Heumann K."/>
            <person name="Kleine K."/>
            <person name="Mewes H.-W."/>
            <person name="Zollner A."/>
            <person name="Zaccaria P."/>
        </authorList>
    </citation>
    <scope>NUCLEOTIDE SEQUENCE [LARGE SCALE GENOMIC DNA]</scope>
    <source>
        <strain>ATCC 204508 / S288c</strain>
    </source>
</reference>
<reference key="2">
    <citation type="journal article" date="2014" name="G3 (Bethesda)">
        <title>The reference genome sequence of Saccharomyces cerevisiae: Then and now.</title>
        <authorList>
            <person name="Engel S.R."/>
            <person name="Dietrich F.S."/>
            <person name="Fisk D.G."/>
            <person name="Binkley G."/>
            <person name="Balakrishnan R."/>
            <person name="Costanzo M.C."/>
            <person name="Dwight S.S."/>
            <person name="Hitz B.C."/>
            <person name="Karra K."/>
            <person name="Nash R.S."/>
            <person name="Weng S."/>
            <person name="Wong E.D."/>
            <person name="Lloyd P."/>
            <person name="Skrzypek M.S."/>
            <person name="Miyasato S.R."/>
            <person name="Simison M."/>
            <person name="Cherry J.M."/>
        </authorList>
    </citation>
    <scope>GENOME REANNOTATION</scope>
    <source>
        <strain>ATCC 204508 / S288c</strain>
    </source>
</reference>
<reference key="3">
    <citation type="journal article" date="2003" name="Nature">
        <title>Global analysis of protein expression in yeast.</title>
        <authorList>
            <person name="Ghaemmaghami S."/>
            <person name="Huh W.-K."/>
            <person name="Bower K."/>
            <person name="Howson R.W."/>
            <person name="Belle A."/>
            <person name="Dephoure N."/>
            <person name="O'Shea E.K."/>
            <person name="Weissman J.S."/>
        </authorList>
    </citation>
    <scope>LEVEL OF PROTEIN EXPRESSION [LARGE SCALE ANALYSIS]</scope>
</reference>
<reference key="4">
    <citation type="journal article" date="2008" name="Mol. Cell. Proteomics">
        <title>A multidimensional chromatography technology for in-depth phosphoproteome analysis.</title>
        <authorList>
            <person name="Albuquerque C.P."/>
            <person name="Smolka M.B."/>
            <person name="Payne S.H."/>
            <person name="Bafna V."/>
            <person name="Eng J."/>
            <person name="Zhou H."/>
        </authorList>
    </citation>
    <scope>IDENTIFICATION BY MASS SPECTROMETRY [LARGE SCALE ANALYSIS]</scope>
</reference>
<reference key="5">
    <citation type="journal article" date="2009" name="Science">
        <title>Global analysis of Cdk1 substrate phosphorylation sites provides insights into evolution.</title>
        <authorList>
            <person name="Holt L.J."/>
            <person name="Tuch B.B."/>
            <person name="Villen J."/>
            <person name="Johnson A.D."/>
            <person name="Gygi S.P."/>
            <person name="Morgan D.O."/>
        </authorList>
    </citation>
    <scope>PHOSPHORYLATION [LARGE SCALE ANALYSIS] AT SER-113</scope>
    <scope>IDENTIFICATION BY MASS SPECTROMETRY [LARGE SCALE ANALYSIS]</scope>
</reference>
<comment type="subcellular location">
    <subcellularLocation>
        <location evidence="4">Membrane</location>
        <topology evidence="4">Multi-pass membrane protein</topology>
    </subcellularLocation>
</comment>
<comment type="miscellaneous">
    <text evidence="3">Present with 195 molecules/cell in log phase SD medium.</text>
</comment>
<comment type="similarity">
    <text evidence="4">Belongs to the multi antimicrobial extrusion (MATE) (TC 2.A.66.1) family.</text>
</comment>
<organism>
    <name type="scientific">Saccharomyces cerevisiae (strain ATCC 204508 / S288c)</name>
    <name type="common">Baker's yeast</name>
    <dbReference type="NCBI Taxonomy" id="559292"/>
    <lineage>
        <taxon>Eukaryota</taxon>
        <taxon>Fungi</taxon>
        <taxon>Dikarya</taxon>
        <taxon>Ascomycota</taxon>
        <taxon>Saccharomycotina</taxon>
        <taxon>Saccharomycetes</taxon>
        <taxon>Saccharomycetales</taxon>
        <taxon>Saccharomycetaceae</taxon>
        <taxon>Saccharomyces</taxon>
    </lineage>
</organism>
<accession>Q05497</accession>
<accession>D6VSX0</accession>
<name>YD338_YEAST</name>
<protein>
    <recommendedName>
        <fullName>Uncharacterized transporter YDR338C</fullName>
    </recommendedName>
</protein>
<dbReference type="EMBL" id="U51032">
    <property type="protein sequence ID" value="AAB64774.1"/>
    <property type="molecule type" value="Genomic_DNA"/>
</dbReference>
<dbReference type="EMBL" id="BK006938">
    <property type="protein sequence ID" value="DAA12180.1"/>
    <property type="molecule type" value="Genomic_DNA"/>
</dbReference>
<dbReference type="PIR" id="S70103">
    <property type="entry name" value="S70103"/>
</dbReference>
<dbReference type="RefSeq" id="NP_010625.1">
    <property type="nucleotide sequence ID" value="NM_001180646.1"/>
</dbReference>
<dbReference type="SMR" id="Q05497"/>
<dbReference type="BioGRID" id="32395">
    <property type="interactions" value="34"/>
</dbReference>
<dbReference type="FunCoup" id="Q05497">
    <property type="interactions" value="169"/>
</dbReference>
<dbReference type="IntAct" id="Q05497">
    <property type="interactions" value="10"/>
</dbReference>
<dbReference type="MINT" id="Q05497"/>
<dbReference type="STRING" id="4932.YDR338C"/>
<dbReference type="iPTMnet" id="Q05497"/>
<dbReference type="PaxDb" id="4932-YDR338C"/>
<dbReference type="PeptideAtlas" id="Q05497"/>
<dbReference type="EnsemblFungi" id="YDR338C_mRNA">
    <property type="protein sequence ID" value="YDR338C"/>
    <property type="gene ID" value="YDR338C"/>
</dbReference>
<dbReference type="GeneID" id="851938"/>
<dbReference type="KEGG" id="sce:YDR338C"/>
<dbReference type="AGR" id="SGD:S000002746"/>
<dbReference type="SGD" id="S000002746">
    <property type="gene designation" value="YDR338C"/>
</dbReference>
<dbReference type="VEuPathDB" id="FungiDB:YDR338C"/>
<dbReference type="eggNOG" id="KOG1347">
    <property type="taxonomic scope" value="Eukaryota"/>
</dbReference>
<dbReference type="HOGENOM" id="CLU_012893_1_2_1"/>
<dbReference type="InParanoid" id="Q05497"/>
<dbReference type="OMA" id="KISHHHI"/>
<dbReference type="OrthoDB" id="2126698at2759"/>
<dbReference type="BioCyc" id="YEAST:G3O-29894-MONOMER"/>
<dbReference type="Reactome" id="R-SCE-425366">
    <property type="pathway name" value="Transport of bile salts and organic acids, metal ions and amine compounds"/>
</dbReference>
<dbReference type="BioGRID-ORCS" id="851938">
    <property type="hits" value="0 hits in 10 CRISPR screens"/>
</dbReference>
<dbReference type="PRO" id="PR:Q05497"/>
<dbReference type="Proteomes" id="UP000002311">
    <property type="component" value="Chromosome IV"/>
</dbReference>
<dbReference type="RNAct" id="Q05497">
    <property type="molecule type" value="protein"/>
</dbReference>
<dbReference type="GO" id="GO:0016020">
    <property type="term" value="C:membrane"/>
    <property type="evidence" value="ECO:0000318"/>
    <property type="project" value="GO_Central"/>
</dbReference>
<dbReference type="GO" id="GO:0015297">
    <property type="term" value="F:antiporter activity"/>
    <property type="evidence" value="ECO:0007669"/>
    <property type="project" value="InterPro"/>
</dbReference>
<dbReference type="GO" id="GO:0022857">
    <property type="term" value="F:transmembrane transporter activity"/>
    <property type="evidence" value="ECO:0000318"/>
    <property type="project" value="GO_Central"/>
</dbReference>
<dbReference type="GO" id="GO:0042910">
    <property type="term" value="F:xenobiotic transmembrane transporter activity"/>
    <property type="evidence" value="ECO:0000250"/>
    <property type="project" value="SGD"/>
</dbReference>
<dbReference type="GO" id="GO:1990961">
    <property type="term" value="P:xenobiotic detoxification by transmembrane export across the plasma membrane"/>
    <property type="evidence" value="ECO:0000305"/>
    <property type="project" value="SGD"/>
</dbReference>
<dbReference type="CDD" id="cd13132">
    <property type="entry name" value="MATE_eukaryotic"/>
    <property type="match status" value="1"/>
</dbReference>
<dbReference type="InterPro" id="IPR045069">
    <property type="entry name" value="MATE_euk"/>
</dbReference>
<dbReference type="InterPro" id="IPR002528">
    <property type="entry name" value="MATE_fam"/>
</dbReference>
<dbReference type="NCBIfam" id="TIGR00797">
    <property type="entry name" value="matE"/>
    <property type="match status" value="1"/>
</dbReference>
<dbReference type="PANTHER" id="PTHR11206">
    <property type="entry name" value="MULTIDRUG RESISTANCE PROTEIN"/>
    <property type="match status" value="1"/>
</dbReference>
<dbReference type="Pfam" id="PF01554">
    <property type="entry name" value="MatE"/>
    <property type="match status" value="2"/>
</dbReference>
<proteinExistence type="evidence at protein level"/>